<feature type="chain" id="PRO_5000101479" description="NADH-quinone oxidoreductase subunit K">
    <location>
        <begin position="1"/>
        <end position="102"/>
    </location>
</feature>
<feature type="transmembrane region" description="Helical" evidence="1">
    <location>
        <begin position="6"/>
        <end position="26"/>
    </location>
</feature>
<feature type="transmembrane region" description="Helical" evidence="1">
    <location>
        <begin position="30"/>
        <end position="50"/>
    </location>
</feature>
<feature type="transmembrane region" description="Helical" evidence="1">
    <location>
        <begin position="64"/>
        <end position="84"/>
    </location>
</feature>
<evidence type="ECO:0000255" key="1">
    <source>
        <dbReference type="HAMAP-Rule" id="MF_01456"/>
    </source>
</evidence>
<evidence type="ECO:0000305" key="2"/>
<accession>Q2YA96</accession>
<keyword id="KW-0997">Cell inner membrane</keyword>
<keyword id="KW-1003">Cell membrane</keyword>
<keyword id="KW-0472">Membrane</keyword>
<keyword id="KW-0520">NAD</keyword>
<keyword id="KW-0874">Quinone</keyword>
<keyword id="KW-1185">Reference proteome</keyword>
<keyword id="KW-1278">Translocase</keyword>
<keyword id="KW-0812">Transmembrane</keyword>
<keyword id="KW-1133">Transmembrane helix</keyword>
<keyword id="KW-0813">Transport</keyword>
<keyword id="KW-0830">Ubiquinone</keyword>
<reference key="1">
    <citation type="submission" date="2005-08" db="EMBL/GenBank/DDBJ databases">
        <title>Complete sequence of chromosome 1 of Nitrosospira multiformis ATCC 25196.</title>
        <authorList>
            <person name="Copeland A."/>
            <person name="Lucas S."/>
            <person name="Lapidus A."/>
            <person name="Barry K."/>
            <person name="Detter J.C."/>
            <person name="Glavina T."/>
            <person name="Hammon N."/>
            <person name="Israni S."/>
            <person name="Pitluck S."/>
            <person name="Chain P."/>
            <person name="Malfatti S."/>
            <person name="Shin M."/>
            <person name="Vergez L."/>
            <person name="Schmutz J."/>
            <person name="Larimer F."/>
            <person name="Land M."/>
            <person name="Hauser L."/>
            <person name="Kyrpides N."/>
            <person name="Lykidis A."/>
            <person name="Richardson P."/>
        </authorList>
    </citation>
    <scope>NUCLEOTIDE SEQUENCE [LARGE SCALE GENOMIC DNA]</scope>
    <source>
        <strain>ATCC 25196 / NCIMB 11849 / C 71</strain>
    </source>
</reference>
<dbReference type="EC" id="7.1.1.-" evidence="1"/>
<dbReference type="EMBL" id="CP000103">
    <property type="protein sequence ID" value="ABB74325.1"/>
    <property type="status" value="ALT_INIT"/>
    <property type="molecule type" value="Genomic_DNA"/>
</dbReference>
<dbReference type="RefSeq" id="WP_104009608.1">
    <property type="nucleotide sequence ID" value="NC_007614.1"/>
</dbReference>
<dbReference type="SMR" id="Q2YA96"/>
<dbReference type="STRING" id="323848.Nmul_A1022"/>
<dbReference type="KEGG" id="nmu:Nmul_A1022"/>
<dbReference type="eggNOG" id="COG0713">
    <property type="taxonomic scope" value="Bacteria"/>
</dbReference>
<dbReference type="HOGENOM" id="CLU_144724_0_1_4"/>
<dbReference type="OrthoDB" id="9801357at2"/>
<dbReference type="Proteomes" id="UP000002718">
    <property type="component" value="Chromosome"/>
</dbReference>
<dbReference type="GO" id="GO:0030964">
    <property type="term" value="C:NADH dehydrogenase complex"/>
    <property type="evidence" value="ECO:0007669"/>
    <property type="project" value="TreeGrafter"/>
</dbReference>
<dbReference type="GO" id="GO:0005886">
    <property type="term" value="C:plasma membrane"/>
    <property type="evidence" value="ECO:0007669"/>
    <property type="project" value="UniProtKB-SubCell"/>
</dbReference>
<dbReference type="GO" id="GO:0050136">
    <property type="term" value="F:NADH:ubiquinone reductase (non-electrogenic) activity"/>
    <property type="evidence" value="ECO:0007669"/>
    <property type="project" value="UniProtKB-UniRule"/>
</dbReference>
<dbReference type="GO" id="GO:0048038">
    <property type="term" value="F:quinone binding"/>
    <property type="evidence" value="ECO:0007669"/>
    <property type="project" value="UniProtKB-KW"/>
</dbReference>
<dbReference type="GO" id="GO:0042773">
    <property type="term" value="P:ATP synthesis coupled electron transport"/>
    <property type="evidence" value="ECO:0007669"/>
    <property type="project" value="InterPro"/>
</dbReference>
<dbReference type="FunFam" id="1.10.287.3510:FF:000001">
    <property type="entry name" value="NADH-quinone oxidoreductase subunit K"/>
    <property type="match status" value="1"/>
</dbReference>
<dbReference type="Gene3D" id="1.10.287.3510">
    <property type="match status" value="1"/>
</dbReference>
<dbReference type="HAMAP" id="MF_01456">
    <property type="entry name" value="NDH1_NuoK"/>
    <property type="match status" value="1"/>
</dbReference>
<dbReference type="InterPro" id="IPR001133">
    <property type="entry name" value="NADH_UbQ_OxRdtase_chain4L/K"/>
</dbReference>
<dbReference type="InterPro" id="IPR039428">
    <property type="entry name" value="NUOK/Mnh_C1-like"/>
</dbReference>
<dbReference type="NCBIfam" id="NF004319">
    <property type="entry name" value="PRK05715.1-1"/>
    <property type="match status" value="1"/>
</dbReference>
<dbReference type="NCBIfam" id="NF004320">
    <property type="entry name" value="PRK05715.1-2"/>
    <property type="match status" value="1"/>
</dbReference>
<dbReference type="PANTHER" id="PTHR11434:SF16">
    <property type="entry name" value="NADH-UBIQUINONE OXIDOREDUCTASE CHAIN 4L"/>
    <property type="match status" value="1"/>
</dbReference>
<dbReference type="PANTHER" id="PTHR11434">
    <property type="entry name" value="NADH-UBIQUINONE OXIDOREDUCTASE SUBUNIT ND4L"/>
    <property type="match status" value="1"/>
</dbReference>
<dbReference type="Pfam" id="PF00420">
    <property type="entry name" value="Oxidored_q2"/>
    <property type="match status" value="1"/>
</dbReference>
<sequence length="102" mass="10969">MAAIPMHHGLLLAAILFALGMIGILVRRNLIFILMSIEIMLNAAGLAFVVAGSHWTQADGQVMFIFILSVAAAEVSVGLALLLLLHRRFQTLDADAVSKMRG</sequence>
<name>NUOK_NITMU</name>
<gene>
    <name evidence="1" type="primary">nuoK</name>
    <name type="ordered locus">Nmul_A1022</name>
</gene>
<proteinExistence type="inferred from homology"/>
<comment type="function">
    <text evidence="1">NDH-1 shuttles electrons from NADH, via FMN and iron-sulfur (Fe-S) centers, to quinones in the respiratory chain. The immediate electron acceptor for the enzyme in this species is believed to be ubiquinone. Couples the redox reaction to proton translocation (for every two electrons transferred, four hydrogen ions are translocated across the cytoplasmic membrane), and thus conserves the redox energy in a proton gradient.</text>
</comment>
<comment type="catalytic activity">
    <reaction evidence="1">
        <text>a quinone + NADH + 5 H(+)(in) = a quinol + NAD(+) + 4 H(+)(out)</text>
        <dbReference type="Rhea" id="RHEA:57888"/>
        <dbReference type="ChEBI" id="CHEBI:15378"/>
        <dbReference type="ChEBI" id="CHEBI:24646"/>
        <dbReference type="ChEBI" id="CHEBI:57540"/>
        <dbReference type="ChEBI" id="CHEBI:57945"/>
        <dbReference type="ChEBI" id="CHEBI:132124"/>
    </reaction>
</comment>
<comment type="subunit">
    <text evidence="1">NDH-1 is composed of 14 different subunits. Subunits NuoA, H, J, K, L, M, N constitute the membrane sector of the complex.</text>
</comment>
<comment type="subcellular location">
    <subcellularLocation>
        <location evidence="1">Cell inner membrane</location>
        <topology evidence="1">Multi-pass membrane protein</topology>
    </subcellularLocation>
</comment>
<comment type="similarity">
    <text evidence="1">Belongs to the complex I subunit 4L family.</text>
</comment>
<comment type="sequence caution" evidence="2">
    <conflict type="erroneous initiation">
        <sequence resource="EMBL-CDS" id="ABB74325"/>
    </conflict>
</comment>
<protein>
    <recommendedName>
        <fullName evidence="1">NADH-quinone oxidoreductase subunit K</fullName>
        <ecNumber evidence="1">7.1.1.-</ecNumber>
    </recommendedName>
    <alternativeName>
        <fullName evidence="1">NADH dehydrogenase I subunit K</fullName>
    </alternativeName>
    <alternativeName>
        <fullName evidence="1">NDH-1 subunit K</fullName>
    </alternativeName>
</protein>
<organism>
    <name type="scientific">Nitrosospira multiformis (strain ATCC 25196 / NCIMB 11849 / C 71)</name>
    <dbReference type="NCBI Taxonomy" id="323848"/>
    <lineage>
        <taxon>Bacteria</taxon>
        <taxon>Pseudomonadati</taxon>
        <taxon>Pseudomonadota</taxon>
        <taxon>Betaproteobacteria</taxon>
        <taxon>Nitrosomonadales</taxon>
        <taxon>Nitrosomonadaceae</taxon>
        <taxon>Nitrosospira</taxon>
    </lineage>
</organism>